<accession>Q5LMQ0</accession>
<organism>
    <name type="scientific">Ruegeria pomeroyi (strain ATCC 700808 / DSM 15171 / DSS-3)</name>
    <name type="common">Silicibacter pomeroyi</name>
    <dbReference type="NCBI Taxonomy" id="246200"/>
    <lineage>
        <taxon>Bacteria</taxon>
        <taxon>Pseudomonadati</taxon>
        <taxon>Pseudomonadota</taxon>
        <taxon>Alphaproteobacteria</taxon>
        <taxon>Rhodobacterales</taxon>
        <taxon>Roseobacteraceae</taxon>
        <taxon>Ruegeria</taxon>
    </lineage>
</organism>
<evidence type="ECO:0000255" key="1">
    <source>
        <dbReference type="HAMAP-Rule" id="MF_01318"/>
    </source>
</evidence>
<evidence type="ECO:0000305" key="2"/>
<proteinExistence type="inferred from homology"/>
<comment type="function">
    <text evidence="1">Binds directly to 23S rRNA. The L1 stalk is quite mobile in the ribosome, and is involved in E site tRNA release.</text>
</comment>
<comment type="function">
    <text evidence="1">Protein L1 is also a translational repressor protein, it controls the translation of the L11 operon by binding to its mRNA.</text>
</comment>
<comment type="subunit">
    <text evidence="1">Part of the 50S ribosomal subunit.</text>
</comment>
<comment type="similarity">
    <text evidence="1">Belongs to the universal ribosomal protein uL1 family.</text>
</comment>
<name>RL1_RUEPO</name>
<protein>
    <recommendedName>
        <fullName evidence="1">Large ribosomal subunit protein uL1</fullName>
    </recommendedName>
    <alternativeName>
        <fullName evidence="2">50S ribosomal protein L1</fullName>
    </alternativeName>
</protein>
<gene>
    <name evidence="1" type="primary">rplA</name>
    <name type="ordered locus">SPO3513</name>
</gene>
<reference key="1">
    <citation type="journal article" date="2004" name="Nature">
        <title>Genome sequence of Silicibacter pomeroyi reveals adaptations to the marine environment.</title>
        <authorList>
            <person name="Moran M.A."/>
            <person name="Buchan A."/>
            <person name="Gonzalez J.M."/>
            <person name="Heidelberg J.F."/>
            <person name="Whitman W.B."/>
            <person name="Kiene R.P."/>
            <person name="Henriksen J.R."/>
            <person name="King G.M."/>
            <person name="Belas R."/>
            <person name="Fuqua C."/>
            <person name="Brinkac L.M."/>
            <person name="Lewis M."/>
            <person name="Johri S."/>
            <person name="Weaver B."/>
            <person name="Pai G."/>
            <person name="Eisen J.A."/>
            <person name="Rahe E."/>
            <person name="Sheldon W.M."/>
            <person name="Ye W."/>
            <person name="Miller T.R."/>
            <person name="Carlton J."/>
            <person name="Rasko D.A."/>
            <person name="Paulsen I.T."/>
            <person name="Ren Q."/>
            <person name="Daugherty S.C."/>
            <person name="DeBoy R.T."/>
            <person name="Dodson R.J."/>
            <person name="Durkin A.S."/>
            <person name="Madupu R."/>
            <person name="Nelson W.C."/>
            <person name="Sullivan S.A."/>
            <person name="Rosovitz M.J."/>
            <person name="Haft D.H."/>
            <person name="Selengut J."/>
            <person name="Ward N."/>
        </authorList>
    </citation>
    <scope>NUCLEOTIDE SEQUENCE [LARGE SCALE GENOMIC DNA]</scope>
    <source>
        <strain>ATCC 700808 / DSM 15171 / DSS-3</strain>
    </source>
</reference>
<reference key="2">
    <citation type="journal article" date="2014" name="Stand. Genomic Sci.">
        <title>An updated genome annotation for the model marine bacterium Ruegeria pomeroyi DSS-3.</title>
        <authorList>
            <person name="Rivers A.R."/>
            <person name="Smith C.B."/>
            <person name="Moran M.A."/>
        </authorList>
    </citation>
    <scope>GENOME REANNOTATION</scope>
    <source>
        <strain>ATCC 700808 / DSM 15171 / DSS-3</strain>
    </source>
</reference>
<sequence length="232" mass="24039">MAKLGKRTRAAREAFAGKEELSVEQAVALIKSAASAKFDETVEIAMNLGVDPRHADQMVRGVVGLPNGTGKTVRVAVFARGPKAEEAQAAGADIVGAEDLMETIQSGKIEFDRCIATPDMMPVVGRLGKILGPRNLMPNPKVGTVTMDVAQAVQNAKGGEVQFKVEKAGVIHAGVGKVSFDEAKLVENVRAFVDAVAKAKPAGAKGTYLKKIALSSTMGPGVSVDVASASGN</sequence>
<keyword id="KW-1185">Reference proteome</keyword>
<keyword id="KW-0678">Repressor</keyword>
<keyword id="KW-0687">Ribonucleoprotein</keyword>
<keyword id="KW-0689">Ribosomal protein</keyword>
<keyword id="KW-0694">RNA-binding</keyword>
<keyword id="KW-0699">rRNA-binding</keyword>
<keyword id="KW-0810">Translation regulation</keyword>
<keyword id="KW-0820">tRNA-binding</keyword>
<dbReference type="EMBL" id="CP000031">
    <property type="protein sequence ID" value="AAV96738.1"/>
    <property type="molecule type" value="Genomic_DNA"/>
</dbReference>
<dbReference type="RefSeq" id="WP_011049193.1">
    <property type="nucleotide sequence ID" value="NC_003911.12"/>
</dbReference>
<dbReference type="SMR" id="Q5LMQ0"/>
<dbReference type="STRING" id="246200.SPO3513"/>
<dbReference type="PaxDb" id="246200-SPO3513"/>
<dbReference type="KEGG" id="sil:SPO3513"/>
<dbReference type="eggNOG" id="COG0081">
    <property type="taxonomic scope" value="Bacteria"/>
</dbReference>
<dbReference type="HOGENOM" id="CLU_062853_0_0_5"/>
<dbReference type="OrthoDB" id="9803740at2"/>
<dbReference type="Proteomes" id="UP000001023">
    <property type="component" value="Chromosome"/>
</dbReference>
<dbReference type="GO" id="GO:0022625">
    <property type="term" value="C:cytosolic large ribosomal subunit"/>
    <property type="evidence" value="ECO:0007669"/>
    <property type="project" value="TreeGrafter"/>
</dbReference>
<dbReference type="GO" id="GO:0019843">
    <property type="term" value="F:rRNA binding"/>
    <property type="evidence" value="ECO:0007669"/>
    <property type="project" value="UniProtKB-UniRule"/>
</dbReference>
<dbReference type="GO" id="GO:0003735">
    <property type="term" value="F:structural constituent of ribosome"/>
    <property type="evidence" value="ECO:0007669"/>
    <property type="project" value="InterPro"/>
</dbReference>
<dbReference type="GO" id="GO:0000049">
    <property type="term" value="F:tRNA binding"/>
    <property type="evidence" value="ECO:0007669"/>
    <property type="project" value="UniProtKB-KW"/>
</dbReference>
<dbReference type="GO" id="GO:0006417">
    <property type="term" value="P:regulation of translation"/>
    <property type="evidence" value="ECO:0007669"/>
    <property type="project" value="UniProtKB-KW"/>
</dbReference>
<dbReference type="GO" id="GO:0006412">
    <property type="term" value="P:translation"/>
    <property type="evidence" value="ECO:0007669"/>
    <property type="project" value="UniProtKB-UniRule"/>
</dbReference>
<dbReference type="CDD" id="cd00403">
    <property type="entry name" value="Ribosomal_L1"/>
    <property type="match status" value="1"/>
</dbReference>
<dbReference type="FunFam" id="3.40.50.790:FF:000001">
    <property type="entry name" value="50S ribosomal protein L1"/>
    <property type="match status" value="1"/>
</dbReference>
<dbReference type="Gene3D" id="3.30.190.20">
    <property type="match status" value="1"/>
</dbReference>
<dbReference type="Gene3D" id="3.40.50.790">
    <property type="match status" value="1"/>
</dbReference>
<dbReference type="HAMAP" id="MF_01318_B">
    <property type="entry name" value="Ribosomal_uL1_B"/>
    <property type="match status" value="1"/>
</dbReference>
<dbReference type="InterPro" id="IPR005878">
    <property type="entry name" value="Ribosom_uL1_bac-type"/>
</dbReference>
<dbReference type="InterPro" id="IPR002143">
    <property type="entry name" value="Ribosomal_uL1"/>
</dbReference>
<dbReference type="InterPro" id="IPR023674">
    <property type="entry name" value="Ribosomal_uL1-like"/>
</dbReference>
<dbReference type="InterPro" id="IPR028364">
    <property type="entry name" value="Ribosomal_uL1/biogenesis"/>
</dbReference>
<dbReference type="InterPro" id="IPR016095">
    <property type="entry name" value="Ribosomal_uL1_3-a/b-sand"/>
</dbReference>
<dbReference type="InterPro" id="IPR023673">
    <property type="entry name" value="Ribosomal_uL1_CS"/>
</dbReference>
<dbReference type="NCBIfam" id="TIGR01169">
    <property type="entry name" value="rplA_bact"/>
    <property type="match status" value="1"/>
</dbReference>
<dbReference type="PANTHER" id="PTHR36427">
    <property type="entry name" value="54S RIBOSOMAL PROTEIN L1, MITOCHONDRIAL"/>
    <property type="match status" value="1"/>
</dbReference>
<dbReference type="PANTHER" id="PTHR36427:SF3">
    <property type="entry name" value="LARGE RIBOSOMAL SUBUNIT PROTEIN UL1M"/>
    <property type="match status" value="1"/>
</dbReference>
<dbReference type="Pfam" id="PF00687">
    <property type="entry name" value="Ribosomal_L1"/>
    <property type="match status" value="1"/>
</dbReference>
<dbReference type="PIRSF" id="PIRSF002155">
    <property type="entry name" value="Ribosomal_L1"/>
    <property type="match status" value="1"/>
</dbReference>
<dbReference type="SUPFAM" id="SSF56808">
    <property type="entry name" value="Ribosomal protein L1"/>
    <property type="match status" value="1"/>
</dbReference>
<dbReference type="PROSITE" id="PS01199">
    <property type="entry name" value="RIBOSOMAL_L1"/>
    <property type="match status" value="1"/>
</dbReference>
<feature type="chain" id="PRO_0000230640" description="Large ribosomal subunit protein uL1">
    <location>
        <begin position="1"/>
        <end position="232"/>
    </location>
</feature>